<feature type="chain" id="PRO_0000069059" description="Adrenocorticotropic hormone receptor">
    <location>
        <begin position="1"/>
        <end position="295"/>
    </location>
</feature>
<feature type="topological domain" description="Extracellular" evidence="1">
    <location>
        <begin position="1"/>
        <end position="23"/>
    </location>
</feature>
<feature type="transmembrane region" description="Helical; Name=1" evidence="1">
    <location>
        <begin position="24"/>
        <end position="49"/>
    </location>
</feature>
<feature type="topological domain" description="Cytoplasmic" evidence="1">
    <location>
        <begin position="50"/>
        <end position="58"/>
    </location>
</feature>
<feature type="transmembrane region" description="Helical; Name=2" evidence="1">
    <location>
        <begin position="59"/>
        <end position="79"/>
    </location>
</feature>
<feature type="topological domain" description="Extracellular" evidence="1">
    <location>
        <begin position="80"/>
        <end position="104"/>
    </location>
</feature>
<feature type="transmembrane region" description="Helical; Name=3" evidence="1">
    <location>
        <begin position="105"/>
        <end position="126"/>
    </location>
</feature>
<feature type="topological domain" description="Cytoplasmic" evidence="1">
    <location>
        <begin position="127"/>
        <end position="147"/>
    </location>
</feature>
<feature type="transmembrane region" description="Helical; Name=4" evidence="1">
    <location>
        <begin position="148"/>
        <end position="168"/>
    </location>
</feature>
<feature type="topological domain" description="Extracellular" evidence="1">
    <location>
        <begin position="169"/>
        <end position="180"/>
    </location>
</feature>
<feature type="transmembrane region" description="Helical; Name=5" evidence="1">
    <location>
        <begin position="181"/>
        <end position="199"/>
    </location>
</feature>
<feature type="topological domain" description="Cytoplasmic" evidence="1">
    <location>
        <begin position="200"/>
        <end position="217"/>
    </location>
</feature>
<feature type="transmembrane region" description="Helical; Name=6" evidence="1">
    <location>
        <begin position="218"/>
        <end position="244"/>
    </location>
</feature>
<feature type="topological domain" description="Extracellular" evidence="1">
    <location>
        <begin position="245"/>
        <end position="256"/>
    </location>
</feature>
<feature type="transmembrane region" description="Helical; Name=7" evidence="1">
    <location>
        <begin position="257"/>
        <end position="278"/>
    </location>
</feature>
<feature type="topological domain" description="Cytoplasmic" evidence="1">
    <location>
        <begin position="279"/>
        <end position="295"/>
    </location>
</feature>
<feature type="lipid moiety-binding region" description="S-palmitoyl cysteine" evidence="4">
    <location>
        <position position="293"/>
    </location>
</feature>
<feature type="glycosylation site" description="N-linked (GlcNAc...) asparagine" evidence="4">
    <location>
        <position position="12"/>
    </location>
</feature>
<feature type="glycosylation site" description="N-linked (GlcNAc...) asparagine" evidence="4">
    <location>
        <position position="17"/>
    </location>
</feature>
<feature type="disulfide bond" evidence="2">
    <location>
        <begin position="21"/>
        <end position="253"/>
    </location>
</feature>
<feature type="disulfide bond" evidence="2">
    <location>
        <begin position="245"/>
        <end position="251"/>
    </location>
</feature>
<dbReference type="EMBL" id="AF116874">
    <property type="protein sequence ID" value="AAF04781.1"/>
    <property type="molecule type" value="mRNA"/>
</dbReference>
<dbReference type="RefSeq" id="NP_001009442.1">
    <property type="nucleotide sequence ID" value="NM_001009442.1"/>
</dbReference>
<dbReference type="SMR" id="Q9TU77"/>
<dbReference type="STRING" id="9940.ENSOARP00000004217"/>
<dbReference type="GlyCosmos" id="Q9TU77">
    <property type="glycosylation" value="2 sites, No reported glycans"/>
</dbReference>
<dbReference type="PaxDb" id="9940-ENSOARP00000004217"/>
<dbReference type="GeneID" id="443482"/>
<dbReference type="KEGG" id="oas:443482"/>
<dbReference type="CTD" id="4158"/>
<dbReference type="eggNOG" id="KOG3656">
    <property type="taxonomic scope" value="Eukaryota"/>
</dbReference>
<dbReference type="OrthoDB" id="9894375at2759"/>
<dbReference type="Proteomes" id="UP000002356">
    <property type="component" value="Unplaced"/>
</dbReference>
<dbReference type="GO" id="GO:0005886">
    <property type="term" value="C:plasma membrane"/>
    <property type="evidence" value="ECO:0007669"/>
    <property type="project" value="UniProtKB-SubCell"/>
</dbReference>
<dbReference type="GO" id="GO:0004978">
    <property type="term" value="F:corticotropin receptor activity"/>
    <property type="evidence" value="ECO:0007669"/>
    <property type="project" value="InterPro"/>
</dbReference>
<dbReference type="Gene3D" id="1.20.1070.10">
    <property type="entry name" value="Rhodopsin 7-helix transmembrane proteins"/>
    <property type="match status" value="1"/>
</dbReference>
<dbReference type="InterPro" id="IPR001168">
    <property type="entry name" value="ACTH_rcpt"/>
</dbReference>
<dbReference type="InterPro" id="IPR000276">
    <property type="entry name" value="GPCR_Rhodpsn"/>
</dbReference>
<dbReference type="InterPro" id="IPR017452">
    <property type="entry name" value="GPCR_Rhodpsn_7TM"/>
</dbReference>
<dbReference type="InterPro" id="IPR001671">
    <property type="entry name" value="Melcrt_ACTH_rcpt"/>
</dbReference>
<dbReference type="PANTHER" id="PTHR22750">
    <property type="entry name" value="G-PROTEIN COUPLED RECEPTOR"/>
    <property type="match status" value="1"/>
</dbReference>
<dbReference type="Pfam" id="PF00001">
    <property type="entry name" value="7tm_1"/>
    <property type="match status" value="2"/>
</dbReference>
<dbReference type="PRINTS" id="PR00520">
    <property type="entry name" value="ACTROPHINR"/>
</dbReference>
<dbReference type="PRINTS" id="PR00237">
    <property type="entry name" value="GPCRRHODOPSN"/>
</dbReference>
<dbReference type="PRINTS" id="PR00534">
    <property type="entry name" value="MCRFAMILY"/>
</dbReference>
<dbReference type="SMART" id="SM01381">
    <property type="entry name" value="7TM_GPCR_Srsx"/>
    <property type="match status" value="1"/>
</dbReference>
<dbReference type="SUPFAM" id="SSF81321">
    <property type="entry name" value="Family A G protein-coupled receptor-like"/>
    <property type="match status" value="1"/>
</dbReference>
<dbReference type="PROSITE" id="PS00237">
    <property type="entry name" value="G_PROTEIN_RECEP_F1_1"/>
    <property type="match status" value="1"/>
</dbReference>
<dbReference type="PROSITE" id="PS50262">
    <property type="entry name" value="G_PROTEIN_RECEP_F1_2"/>
    <property type="match status" value="1"/>
</dbReference>
<comment type="function">
    <text evidence="2 3">Hormone receptor primarily expressed in adrenal cortex that plays a key role in regulating adrenocortical function (By similarity). Upon corticotropin (ACTH) binding, facilitates the release of adrenal glucocorticoids, including cortisol and corticosterone. In addition, MC2R is required for fetal and neonatal adrenal gland development (By similarity). Mechanistically, activates adenylate cyclase (cAMP), the MAPK cascade as well as the cAMP-dependent protein kinase A pathway leading to steroidogenic factor 1/NR5A1-mediated transcriptional activation (By similarity).</text>
</comment>
<comment type="subunit">
    <text evidence="2">Homodimer. Interacts with corticotropin (ACTH). Interacts with MRAP; this interaction targets MC2R to the plasma membrane. Interacts with MRAP2; competing with MRAP for binding to MC2R and impairing the binding of corticotropin (ACTH).</text>
</comment>
<comment type="subcellular location">
    <subcellularLocation>
        <location evidence="2">Cell membrane</location>
        <topology evidence="2">Multi-pass membrane protein</topology>
    </subcellularLocation>
</comment>
<comment type="PTM">
    <text evidence="2">Ubiquitinated by MGRN1 that may be involved in post-endocytic trafficking and/or degradation of internalized receptor.</text>
</comment>
<comment type="similarity">
    <text evidence="5">Belongs to the G-protein coupled receptor 1 family.</text>
</comment>
<sequence>MRHILNLYENINSTARNNSDCPAVILPEEIFFTVSIVGVLENLMVLLAVAKNKSLQSPMYFFICSLAISDMLGSLYKILENVLIMFRNMGYLEPRGSFESTADDVVDSLFILSLLGSICSLSVIAADRYITIFHALQYHSIVTMHRALVVLTVLWAGCTGSGITIVTFSHHVPTVIAFTALFPLMLAFILCLYVHMFLLARSHARRTSSLPKANMRGAITLTVLLGVFIFCWAPFVLHVLLMTFCPADPYCACYMSLFQVNGVLIMCNAVIDPFIYAFRSPELRVAFKKMVICNW</sequence>
<organism>
    <name type="scientific">Ovis aries</name>
    <name type="common">Sheep</name>
    <dbReference type="NCBI Taxonomy" id="9940"/>
    <lineage>
        <taxon>Eukaryota</taxon>
        <taxon>Metazoa</taxon>
        <taxon>Chordata</taxon>
        <taxon>Craniata</taxon>
        <taxon>Vertebrata</taxon>
        <taxon>Euteleostomi</taxon>
        <taxon>Mammalia</taxon>
        <taxon>Eutheria</taxon>
        <taxon>Laurasiatheria</taxon>
        <taxon>Artiodactyla</taxon>
        <taxon>Ruminantia</taxon>
        <taxon>Pecora</taxon>
        <taxon>Bovidae</taxon>
        <taxon>Caprinae</taxon>
        <taxon>Ovis</taxon>
    </lineage>
</organism>
<evidence type="ECO:0000250" key="1"/>
<evidence type="ECO:0000250" key="2">
    <source>
        <dbReference type="UniProtKB" id="Q01718"/>
    </source>
</evidence>
<evidence type="ECO:0000250" key="3">
    <source>
        <dbReference type="UniProtKB" id="Q64326"/>
    </source>
</evidence>
<evidence type="ECO:0000255" key="4"/>
<evidence type="ECO:0000255" key="5">
    <source>
        <dbReference type="PROSITE-ProRule" id="PRU00521"/>
    </source>
</evidence>
<keyword id="KW-1003">Cell membrane</keyword>
<keyword id="KW-1015">Disulfide bond</keyword>
<keyword id="KW-0297">G-protein coupled receptor</keyword>
<keyword id="KW-0325">Glycoprotein</keyword>
<keyword id="KW-0449">Lipoprotein</keyword>
<keyword id="KW-0472">Membrane</keyword>
<keyword id="KW-0564">Palmitate</keyword>
<keyword id="KW-0675">Receptor</keyword>
<keyword id="KW-1185">Reference proteome</keyword>
<keyword id="KW-0807">Transducer</keyword>
<keyword id="KW-0812">Transmembrane</keyword>
<keyword id="KW-1133">Transmembrane helix</keyword>
<keyword id="KW-0832">Ubl conjugation</keyword>
<proteinExistence type="evidence at transcript level"/>
<protein>
    <recommendedName>
        <fullName>Adrenocorticotropic hormone receptor</fullName>
        <shortName>ACTH receptor</shortName>
        <shortName>ACTH-R</shortName>
    </recommendedName>
    <alternativeName>
        <fullName>Adrenocorticotropin receptor</fullName>
    </alternativeName>
    <alternativeName>
        <fullName>Melanocortin receptor 2</fullName>
        <shortName>MC2-R</shortName>
    </alternativeName>
</protein>
<gene>
    <name type="primary">MC2R</name>
</gene>
<name>ACTHR_SHEEP</name>
<accession>Q9TU77</accession>
<reference key="1">
    <citation type="submission" date="1998-12" db="EMBL/GenBank/DDBJ databases">
        <title>Ovine adrenal ACTH receptor: cDNA cloning and developmental changes of mRNA levels.</title>
        <authorList>
            <person name="Wang J."/>
            <person name="Rose J.C."/>
        </authorList>
    </citation>
    <scope>NUCLEOTIDE SEQUENCE [MRNA]</scope>
    <source>
        <strain>Merino</strain>
        <tissue>Adrenal gland</tissue>
    </source>
</reference>